<reference key="1">
    <citation type="journal article" date="2005" name="Nature">
        <title>The genome of the social amoeba Dictyostelium discoideum.</title>
        <authorList>
            <person name="Eichinger L."/>
            <person name="Pachebat J.A."/>
            <person name="Gloeckner G."/>
            <person name="Rajandream M.A."/>
            <person name="Sucgang R."/>
            <person name="Berriman M."/>
            <person name="Song J."/>
            <person name="Olsen R."/>
            <person name="Szafranski K."/>
            <person name="Xu Q."/>
            <person name="Tunggal B."/>
            <person name="Kummerfeld S."/>
            <person name="Madera M."/>
            <person name="Konfortov B.A."/>
            <person name="Rivero F."/>
            <person name="Bankier A.T."/>
            <person name="Lehmann R."/>
            <person name="Hamlin N."/>
            <person name="Davies R."/>
            <person name="Gaudet P."/>
            <person name="Fey P."/>
            <person name="Pilcher K."/>
            <person name="Chen G."/>
            <person name="Saunders D."/>
            <person name="Sodergren E.J."/>
            <person name="Davis P."/>
            <person name="Kerhornou A."/>
            <person name="Nie X."/>
            <person name="Hall N."/>
            <person name="Anjard C."/>
            <person name="Hemphill L."/>
            <person name="Bason N."/>
            <person name="Farbrother P."/>
            <person name="Desany B."/>
            <person name="Just E."/>
            <person name="Morio T."/>
            <person name="Rost R."/>
            <person name="Churcher C.M."/>
            <person name="Cooper J."/>
            <person name="Haydock S."/>
            <person name="van Driessche N."/>
            <person name="Cronin A."/>
            <person name="Goodhead I."/>
            <person name="Muzny D.M."/>
            <person name="Mourier T."/>
            <person name="Pain A."/>
            <person name="Lu M."/>
            <person name="Harper D."/>
            <person name="Lindsay R."/>
            <person name="Hauser H."/>
            <person name="James K.D."/>
            <person name="Quiles M."/>
            <person name="Madan Babu M."/>
            <person name="Saito T."/>
            <person name="Buchrieser C."/>
            <person name="Wardroper A."/>
            <person name="Felder M."/>
            <person name="Thangavelu M."/>
            <person name="Johnson D."/>
            <person name="Knights A."/>
            <person name="Loulseged H."/>
            <person name="Mungall K.L."/>
            <person name="Oliver K."/>
            <person name="Price C."/>
            <person name="Quail M.A."/>
            <person name="Urushihara H."/>
            <person name="Hernandez J."/>
            <person name="Rabbinowitsch E."/>
            <person name="Steffen D."/>
            <person name="Sanders M."/>
            <person name="Ma J."/>
            <person name="Kohara Y."/>
            <person name="Sharp S."/>
            <person name="Simmonds M.N."/>
            <person name="Spiegler S."/>
            <person name="Tivey A."/>
            <person name="Sugano S."/>
            <person name="White B."/>
            <person name="Walker D."/>
            <person name="Woodward J.R."/>
            <person name="Winckler T."/>
            <person name="Tanaka Y."/>
            <person name="Shaulsky G."/>
            <person name="Schleicher M."/>
            <person name="Weinstock G.M."/>
            <person name="Rosenthal A."/>
            <person name="Cox E.C."/>
            <person name="Chisholm R.L."/>
            <person name="Gibbs R.A."/>
            <person name="Loomis W.F."/>
            <person name="Platzer M."/>
            <person name="Kay R.R."/>
            <person name="Williams J.G."/>
            <person name="Dear P.H."/>
            <person name="Noegel A.A."/>
            <person name="Barrell B.G."/>
            <person name="Kuspa A."/>
        </authorList>
    </citation>
    <scope>NUCLEOTIDE SEQUENCE [LARGE SCALE GENOMIC DNA]</scope>
    <source>
        <strain>AX4</strain>
    </source>
</reference>
<protein>
    <recommendedName>
        <fullName>Putative uncharacterized protein DDB_G0285383</fullName>
    </recommendedName>
</protein>
<feature type="chain" id="PRO_0000350803" description="Putative uncharacterized protein DDB_G0285383">
    <location>
        <begin position="1"/>
        <end position="45"/>
    </location>
</feature>
<dbReference type="EMBL" id="AAFI02000079">
    <property type="protein sequence ID" value="EAL64766.1"/>
    <property type="molecule type" value="Genomic_DNA"/>
</dbReference>
<dbReference type="RefSeq" id="XP_638285.1">
    <property type="nucleotide sequence ID" value="XM_633193.1"/>
</dbReference>
<dbReference type="SMR" id="Q54N95"/>
<dbReference type="PaxDb" id="44689-DDB0186488"/>
<dbReference type="EnsemblProtists" id="EAL64766">
    <property type="protein sequence ID" value="EAL64766"/>
    <property type="gene ID" value="DDB_G0285383"/>
</dbReference>
<dbReference type="GeneID" id="8625093"/>
<dbReference type="KEGG" id="ddi:DDB_G0285383"/>
<dbReference type="dictyBase" id="DDB_G0285383"/>
<dbReference type="VEuPathDB" id="AmoebaDB:DDB_G0285383"/>
<dbReference type="HOGENOM" id="CLU_3208736_0_0_1"/>
<dbReference type="InParanoid" id="Q54N95"/>
<dbReference type="PRO" id="PR:Q54N95"/>
<dbReference type="Proteomes" id="UP000002195">
    <property type="component" value="Chromosome 4"/>
</dbReference>
<gene>
    <name type="ORF">DDB_G0285383</name>
</gene>
<name>Y6488_DICDI</name>
<organism>
    <name type="scientific">Dictyostelium discoideum</name>
    <name type="common">Social amoeba</name>
    <dbReference type="NCBI Taxonomy" id="44689"/>
    <lineage>
        <taxon>Eukaryota</taxon>
        <taxon>Amoebozoa</taxon>
        <taxon>Evosea</taxon>
        <taxon>Eumycetozoa</taxon>
        <taxon>Dictyostelia</taxon>
        <taxon>Dictyosteliales</taxon>
        <taxon>Dictyosteliaceae</taxon>
        <taxon>Dictyostelium</taxon>
    </lineage>
</organism>
<accession>Q54N95</accession>
<sequence>MDAIQTRMVISEFEKRIRREAQEKINQFSQQQWILYHLSHPDDEQ</sequence>
<keyword id="KW-1185">Reference proteome</keyword>
<proteinExistence type="predicted"/>